<feature type="chain" id="PRO_0000266510" description="Large ribosomal subunit protein uL14">
    <location>
        <begin position="1"/>
        <end position="122"/>
    </location>
</feature>
<dbReference type="EMBL" id="AL157959">
    <property type="protein sequence ID" value="CAM07437.1"/>
    <property type="molecule type" value="Genomic_DNA"/>
</dbReference>
<dbReference type="PIR" id="B81232">
    <property type="entry name" value="B81232"/>
</dbReference>
<dbReference type="RefSeq" id="WP_002215434.1">
    <property type="nucleotide sequence ID" value="NC_003116.1"/>
</dbReference>
<dbReference type="SMR" id="Q9JQY4"/>
<dbReference type="EnsemblBacteria" id="CAM07437">
    <property type="protein sequence ID" value="CAM07437"/>
    <property type="gene ID" value="NMA0119"/>
</dbReference>
<dbReference type="GeneID" id="94582047"/>
<dbReference type="KEGG" id="nma:NMA0119"/>
<dbReference type="HOGENOM" id="CLU_095071_2_1_4"/>
<dbReference type="Proteomes" id="UP000000626">
    <property type="component" value="Chromosome"/>
</dbReference>
<dbReference type="GO" id="GO:0022625">
    <property type="term" value="C:cytosolic large ribosomal subunit"/>
    <property type="evidence" value="ECO:0007669"/>
    <property type="project" value="TreeGrafter"/>
</dbReference>
<dbReference type="GO" id="GO:0070180">
    <property type="term" value="F:large ribosomal subunit rRNA binding"/>
    <property type="evidence" value="ECO:0007669"/>
    <property type="project" value="TreeGrafter"/>
</dbReference>
<dbReference type="GO" id="GO:0003735">
    <property type="term" value="F:structural constituent of ribosome"/>
    <property type="evidence" value="ECO:0007669"/>
    <property type="project" value="InterPro"/>
</dbReference>
<dbReference type="GO" id="GO:0006412">
    <property type="term" value="P:translation"/>
    <property type="evidence" value="ECO:0007669"/>
    <property type="project" value="UniProtKB-UniRule"/>
</dbReference>
<dbReference type="CDD" id="cd00337">
    <property type="entry name" value="Ribosomal_uL14"/>
    <property type="match status" value="1"/>
</dbReference>
<dbReference type="FunFam" id="2.40.150.20:FF:000001">
    <property type="entry name" value="50S ribosomal protein L14"/>
    <property type="match status" value="1"/>
</dbReference>
<dbReference type="Gene3D" id="2.40.150.20">
    <property type="entry name" value="Ribosomal protein L14"/>
    <property type="match status" value="1"/>
</dbReference>
<dbReference type="HAMAP" id="MF_01367">
    <property type="entry name" value="Ribosomal_uL14"/>
    <property type="match status" value="1"/>
</dbReference>
<dbReference type="InterPro" id="IPR000218">
    <property type="entry name" value="Ribosomal_uL14"/>
</dbReference>
<dbReference type="InterPro" id="IPR005745">
    <property type="entry name" value="Ribosomal_uL14_bac-type"/>
</dbReference>
<dbReference type="InterPro" id="IPR019972">
    <property type="entry name" value="Ribosomal_uL14_CS"/>
</dbReference>
<dbReference type="InterPro" id="IPR036853">
    <property type="entry name" value="Ribosomal_uL14_sf"/>
</dbReference>
<dbReference type="NCBIfam" id="TIGR01067">
    <property type="entry name" value="rplN_bact"/>
    <property type="match status" value="1"/>
</dbReference>
<dbReference type="PANTHER" id="PTHR11761">
    <property type="entry name" value="50S/60S RIBOSOMAL PROTEIN L14/L23"/>
    <property type="match status" value="1"/>
</dbReference>
<dbReference type="PANTHER" id="PTHR11761:SF3">
    <property type="entry name" value="LARGE RIBOSOMAL SUBUNIT PROTEIN UL14M"/>
    <property type="match status" value="1"/>
</dbReference>
<dbReference type="Pfam" id="PF00238">
    <property type="entry name" value="Ribosomal_L14"/>
    <property type="match status" value="1"/>
</dbReference>
<dbReference type="SMART" id="SM01374">
    <property type="entry name" value="Ribosomal_L14"/>
    <property type="match status" value="1"/>
</dbReference>
<dbReference type="SUPFAM" id="SSF50193">
    <property type="entry name" value="Ribosomal protein L14"/>
    <property type="match status" value="1"/>
</dbReference>
<dbReference type="PROSITE" id="PS00049">
    <property type="entry name" value="RIBOSOMAL_L14"/>
    <property type="match status" value="1"/>
</dbReference>
<reference key="1">
    <citation type="journal article" date="2000" name="Nature">
        <title>Complete DNA sequence of a serogroup A strain of Neisseria meningitidis Z2491.</title>
        <authorList>
            <person name="Parkhill J."/>
            <person name="Achtman M."/>
            <person name="James K.D."/>
            <person name="Bentley S.D."/>
            <person name="Churcher C.M."/>
            <person name="Klee S.R."/>
            <person name="Morelli G."/>
            <person name="Basham D."/>
            <person name="Brown D."/>
            <person name="Chillingworth T."/>
            <person name="Davies R.M."/>
            <person name="Davis P."/>
            <person name="Devlin K."/>
            <person name="Feltwell T."/>
            <person name="Hamlin N."/>
            <person name="Holroyd S."/>
            <person name="Jagels K."/>
            <person name="Leather S."/>
            <person name="Moule S."/>
            <person name="Mungall K.L."/>
            <person name="Quail M.A."/>
            <person name="Rajandream M.A."/>
            <person name="Rutherford K.M."/>
            <person name="Simmonds M."/>
            <person name="Skelton J."/>
            <person name="Whitehead S."/>
            <person name="Spratt B.G."/>
            <person name="Barrell B.G."/>
        </authorList>
    </citation>
    <scope>NUCLEOTIDE SEQUENCE [LARGE SCALE GENOMIC DNA]</scope>
    <source>
        <strain>DSM 15465 / Z2491</strain>
    </source>
</reference>
<accession>Q9JQY4</accession>
<accession>A1INY0</accession>
<protein>
    <recommendedName>
        <fullName evidence="1">Large ribosomal subunit protein uL14</fullName>
    </recommendedName>
    <alternativeName>
        <fullName evidence="2">50S ribosomal protein L14</fullName>
    </alternativeName>
</protein>
<proteinExistence type="inferred from homology"/>
<gene>
    <name evidence="1" type="primary">rplN</name>
    <name type="ordered locus">NMA0119</name>
</gene>
<evidence type="ECO:0000255" key="1">
    <source>
        <dbReference type="HAMAP-Rule" id="MF_01367"/>
    </source>
</evidence>
<evidence type="ECO:0000305" key="2"/>
<keyword id="KW-0687">Ribonucleoprotein</keyword>
<keyword id="KW-0689">Ribosomal protein</keyword>
<keyword id="KW-0694">RNA-binding</keyword>
<keyword id="KW-0699">rRNA-binding</keyword>
<comment type="function">
    <text evidence="1">Binds to 23S rRNA. Forms part of two intersubunit bridges in the 70S ribosome.</text>
</comment>
<comment type="subunit">
    <text evidence="1">Part of the 50S ribosomal subunit. Forms a cluster with proteins L3 and L19. In the 70S ribosome, L14 and L19 interact and together make contacts with the 16S rRNA in bridges B5 and B8.</text>
</comment>
<comment type="similarity">
    <text evidence="1">Belongs to the universal ribosomal protein uL14 family.</text>
</comment>
<sequence length="122" mass="13375">MIQMQTILDVADNSGARRVMCIKVLGGSKRRYASVGDIIKVAVKDAAPRGRVKKGDVYNAVVVRTAKGVRRPDGALIKFDNNAAVLLNNKLEPLGTRIFGPVTRELRTERFMKIVSLAPEVL</sequence>
<organism>
    <name type="scientific">Neisseria meningitidis serogroup A / serotype 4A (strain DSM 15465 / Z2491)</name>
    <dbReference type="NCBI Taxonomy" id="122587"/>
    <lineage>
        <taxon>Bacteria</taxon>
        <taxon>Pseudomonadati</taxon>
        <taxon>Pseudomonadota</taxon>
        <taxon>Betaproteobacteria</taxon>
        <taxon>Neisseriales</taxon>
        <taxon>Neisseriaceae</taxon>
        <taxon>Neisseria</taxon>
    </lineage>
</organism>
<name>RL14_NEIMA</name>